<sequence>MERTIDPLTLPYRPCVGIVLINREGLIFAGQRIDSPVPAWQMPQGGIDEGEKPREAALRELWEETGIPAERVEFVAKAPDWVTYDLPPELLGRVWGGKYRGQRQKWFLYRYLGTDEEVGIGTDHAEFSCWRWIGAEEMVAAIVPFKRAVYEEVVATFRPHLA</sequence>
<keyword id="KW-0378">Hydrolase</keyword>
<keyword id="KW-1185">Reference proteome</keyword>
<feature type="chain" id="PRO_0000231930" description="RNA pyrophosphohydrolase">
    <location>
        <begin position="1"/>
        <end position="162"/>
    </location>
</feature>
<feature type="domain" description="Nudix hydrolase" evidence="1">
    <location>
        <begin position="11"/>
        <end position="155"/>
    </location>
</feature>
<feature type="short sequence motif" description="Nudix box">
    <location>
        <begin position="45"/>
        <end position="66"/>
    </location>
</feature>
<accession>Q3IZC1</accession>
<gene>
    <name evidence="1" type="primary">rppH</name>
    <name evidence="1" type="synonym">nudH</name>
    <name type="ordered locus">RHOS4_25450</name>
    <name type="ORF">RSP_0931</name>
</gene>
<protein>
    <recommendedName>
        <fullName evidence="1">RNA pyrophosphohydrolase</fullName>
        <ecNumber evidence="1">3.6.1.-</ecNumber>
    </recommendedName>
    <alternativeName>
        <fullName evidence="1">(Di)nucleoside polyphosphate hydrolase</fullName>
    </alternativeName>
</protein>
<dbReference type="EC" id="3.6.1.-" evidence="1"/>
<dbReference type="EMBL" id="CP000143">
    <property type="protein sequence ID" value="ABA80113.1"/>
    <property type="molecule type" value="Genomic_DNA"/>
</dbReference>
<dbReference type="RefSeq" id="WP_011338602.1">
    <property type="nucleotide sequence ID" value="NZ_CP030271.1"/>
</dbReference>
<dbReference type="RefSeq" id="YP_354014.1">
    <property type="nucleotide sequence ID" value="NC_007493.2"/>
</dbReference>
<dbReference type="SMR" id="Q3IZC1"/>
<dbReference type="STRING" id="272943.RSP_0931"/>
<dbReference type="EnsemblBacteria" id="ABA80113">
    <property type="protein sequence ID" value="ABA80113"/>
    <property type="gene ID" value="RSP_0931"/>
</dbReference>
<dbReference type="KEGG" id="rsp:RSP_0931"/>
<dbReference type="PATRIC" id="fig|272943.9.peg.2899"/>
<dbReference type="eggNOG" id="COG0494">
    <property type="taxonomic scope" value="Bacteria"/>
</dbReference>
<dbReference type="OrthoDB" id="9816040at2"/>
<dbReference type="PhylomeDB" id="Q3IZC1"/>
<dbReference type="Proteomes" id="UP000002703">
    <property type="component" value="Chromosome 1"/>
</dbReference>
<dbReference type="GO" id="GO:0034432">
    <property type="term" value="F:bis(5'-adenosyl)-pentaphosphatase activity"/>
    <property type="evidence" value="ECO:0007669"/>
    <property type="project" value="TreeGrafter"/>
</dbReference>
<dbReference type="GO" id="GO:0008893">
    <property type="term" value="F:guanosine-3',5'-bis(diphosphate) 3'-diphosphatase activity"/>
    <property type="evidence" value="ECO:0007669"/>
    <property type="project" value="TreeGrafter"/>
</dbReference>
<dbReference type="GO" id="GO:0006753">
    <property type="term" value="P:nucleoside phosphate metabolic process"/>
    <property type="evidence" value="ECO:0007669"/>
    <property type="project" value="TreeGrafter"/>
</dbReference>
<dbReference type="GO" id="GO:0019693">
    <property type="term" value="P:ribose phosphate metabolic process"/>
    <property type="evidence" value="ECO:0007669"/>
    <property type="project" value="TreeGrafter"/>
</dbReference>
<dbReference type="CDD" id="cd03671">
    <property type="entry name" value="NUDIX_Ap4A_hydrolase_plant_like"/>
    <property type="match status" value="1"/>
</dbReference>
<dbReference type="Gene3D" id="3.90.79.10">
    <property type="entry name" value="Nucleoside Triphosphate Pyrophosphohydrolase"/>
    <property type="match status" value="1"/>
</dbReference>
<dbReference type="HAMAP" id="MF_00298">
    <property type="entry name" value="Nudix_RppH"/>
    <property type="match status" value="1"/>
</dbReference>
<dbReference type="InterPro" id="IPR020476">
    <property type="entry name" value="Nudix_hydrolase"/>
</dbReference>
<dbReference type="InterPro" id="IPR015797">
    <property type="entry name" value="NUDIX_hydrolase-like_dom_sf"/>
</dbReference>
<dbReference type="InterPro" id="IPR020084">
    <property type="entry name" value="NUDIX_hydrolase_CS"/>
</dbReference>
<dbReference type="InterPro" id="IPR000086">
    <property type="entry name" value="NUDIX_hydrolase_dom"/>
</dbReference>
<dbReference type="InterPro" id="IPR022927">
    <property type="entry name" value="RppH"/>
</dbReference>
<dbReference type="NCBIfam" id="NF001938">
    <property type="entry name" value="PRK00714.1-5"/>
    <property type="match status" value="1"/>
</dbReference>
<dbReference type="PANTHER" id="PTHR11839:SF22">
    <property type="entry name" value="NUDIX HYDROLASE 26, CHLOROPLASTIC"/>
    <property type="match status" value="1"/>
</dbReference>
<dbReference type="PANTHER" id="PTHR11839">
    <property type="entry name" value="UDP/ADP-SUGAR PYROPHOSPHATASE"/>
    <property type="match status" value="1"/>
</dbReference>
<dbReference type="Pfam" id="PF00293">
    <property type="entry name" value="NUDIX"/>
    <property type="match status" value="1"/>
</dbReference>
<dbReference type="PRINTS" id="PR00502">
    <property type="entry name" value="NUDIXFAMILY"/>
</dbReference>
<dbReference type="SUPFAM" id="SSF55811">
    <property type="entry name" value="Nudix"/>
    <property type="match status" value="1"/>
</dbReference>
<dbReference type="PROSITE" id="PS51462">
    <property type="entry name" value="NUDIX"/>
    <property type="match status" value="1"/>
</dbReference>
<dbReference type="PROSITE" id="PS00893">
    <property type="entry name" value="NUDIX_BOX"/>
    <property type="match status" value="1"/>
</dbReference>
<comment type="function">
    <text evidence="1">Accelerates the degradation of transcripts by removing pyrophosphate from the 5'-end of triphosphorylated RNA, leading to a more labile monophosphorylated state that can stimulate subsequent ribonuclease cleavage.</text>
</comment>
<comment type="cofactor">
    <cofactor evidence="1">
        <name>a divalent metal cation</name>
        <dbReference type="ChEBI" id="CHEBI:60240"/>
    </cofactor>
</comment>
<comment type="similarity">
    <text evidence="1">Belongs to the Nudix hydrolase family. RppH subfamily.</text>
</comment>
<reference key="1">
    <citation type="submission" date="2005-09" db="EMBL/GenBank/DDBJ databases">
        <title>Complete sequence of chromosome 1 of Rhodobacter sphaeroides 2.4.1.</title>
        <authorList>
            <person name="Copeland A."/>
            <person name="Lucas S."/>
            <person name="Lapidus A."/>
            <person name="Barry K."/>
            <person name="Detter J.C."/>
            <person name="Glavina T."/>
            <person name="Hammon N."/>
            <person name="Israni S."/>
            <person name="Pitluck S."/>
            <person name="Richardson P."/>
            <person name="Mackenzie C."/>
            <person name="Choudhary M."/>
            <person name="Larimer F."/>
            <person name="Hauser L.J."/>
            <person name="Land M."/>
            <person name="Donohue T.J."/>
            <person name="Kaplan S."/>
        </authorList>
    </citation>
    <scope>NUCLEOTIDE SEQUENCE [LARGE SCALE GENOMIC DNA]</scope>
    <source>
        <strain>ATCC 17023 / DSM 158 / JCM 6121 / CCUG 31486 / LMG 2827 / NBRC 12203 / NCIMB 8253 / ATH 2.4.1.</strain>
    </source>
</reference>
<organism>
    <name type="scientific">Cereibacter sphaeroides (strain ATCC 17023 / DSM 158 / JCM 6121 / CCUG 31486 / LMG 2827 / NBRC 12203 / NCIMB 8253 / ATH 2.4.1.)</name>
    <name type="common">Rhodobacter sphaeroides</name>
    <dbReference type="NCBI Taxonomy" id="272943"/>
    <lineage>
        <taxon>Bacteria</taxon>
        <taxon>Pseudomonadati</taxon>
        <taxon>Pseudomonadota</taxon>
        <taxon>Alphaproteobacteria</taxon>
        <taxon>Rhodobacterales</taxon>
        <taxon>Paracoccaceae</taxon>
        <taxon>Cereibacter</taxon>
    </lineage>
</organism>
<proteinExistence type="inferred from homology"/>
<evidence type="ECO:0000255" key="1">
    <source>
        <dbReference type="HAMAP-Rule" id="MF_00298"/>
    </source>
</evidence>
<name>RPPH_CERS4</name>